<gene>
    <name type="primary">ptsI</name>
    <name type="ordered locus">SERP0670</name>
</gene>
<dbReference type="EC" id="2.7.3.9" evidence="1"/>
<dbReference type="EMBL" id="CP000029">
    <property type="protein sequence ID" value="AAW54027.1"/>
    <property type="molecule type" value="Genomic_DNA"/>
</dbReference>
<dbReference type="SMR" id="Q5HQ85"/>
<dbReference type="STRING" id="176279.SERP0670"/>
<dbReference type="KEGG" id="ser:SERP0670"/>
<dbReference type="eggNOG" id="COG1080">
    <property type="taxonomic scope" value="Bacteria"/>
</dbReference>
<dbReference type="HOGENOM" id="CLU_007308_7_0_9"/>
<dbReference type="Proteomes" id="UP000000531">
    <property type="component" value="Chromosome"/>
</dbReference>
<dbReference type="GO" id="GO:0005737">
    <property type="term" value="C:cytoplasm"/>
    <property type="evidence" value="ECO:0007669"/>
    <property type="project" value="UniProtKB-SubCell"/>
</dbReference>
<dbReference type="GO" id="GO:0016301">
    <property type="term" value="F:kinase activity"/>
    <property type="evidence" value="ECO:0007669"/>
    <property type="project" value="UniProtKB-KW"/>
</dbReference>
<dbReference type="GO" id="GO:0046872">
    <property type="term" value="F:metal ion binding"/>
    <property type="evidence" value="ECO:0007669"/>
    <property type="project" value="UniProtKB-KW"/>
</dbReference>
<dbReference type="GO" id="GO:0008965">
    <property type="term" value="F:phosphoenolpyruvate-protein phosphotransferase activity"/>
    <property type="evidence" value="ECO:0007669"/>
    <property type="project" value="UniProtKB-EC"/>
</dbReference>
<dbReference type="GO" id="GO:0009401">
    <property type="term" value="P:phosphoenolpyruvate-dependent sugar phosphotransferase system"/>
    <property type="evidence" value="ECO:0007669"/>
    <property type="project" value="UniProtKB-KW"/>
</dbReference>
<dbReference type="FunFam" id="1.10.274.10:FF:000001">
    <property type="entry name" value="Phosphoenolpyruvate-protein phosphotransferase"/>
    <property type="match status" value="1"/>
</dbReference>
<dbReference type="FunFam" id="3.20.20.60:FF:000007">
    <property type="entry name" value="Phosphoenolpyruvate-protein phosphotransferase"/>
    <property type="match status" value="1"/>
</dbReference>
<dbReference type="Gene3D" id="3.20.20.60">
    <property type="entry name" value="Phosphoenolpyruvate-binding domains"/>
    <property type="match status" value="1"/>
</dbReference>
<dbReference type="Gene3D" id="3.50.30.10">
    <property type="entry name" value="Phosphohistidine domain"/>
    <property type="match status" value="1"/>
</dbReference>
<dbReference type="Gene3D" id="1.10.274.10">
    <property type="entry name" value="PtsI, HPr-binding domain"/>
    <property type="match status" value="1"/>
</dbReference>
<dbReference type="InterPro" id="IPR008279">
    <property type="entry name" value="PEP-util_enz_mobile_dom"/>
</dbReference>
<dbReference type="InterPro" id="IPR050499">
    <property type="entry name" value="PEP-utilizing_PTS_enzyme"/>
</dbReference>
<dbReference type="InterPro" id="IPR018274">
    <property type="entry name" value="PEP_util_AS"/>
</dbReference>
<dbReference type="InterPro" id="IPR000121">
    <property type="entry name" value="PEP_util_C"/>
</dbReference>
<dbReference type="InterPro" id="IPR023151">
    <property type="entry name" value="PEP_util_CS"/>
</dbReference>
<dbReference type="InterPro" id="IPR036637">
    <property type="entry name" value="Phosphohistidine_dom_sf"/>
</dbReference>
<dbReference type="InterPro" id="IPR024692">
    <property type="entry name" value="PTS_EI"/>
</dbReference>
<dbReference type="InterPro" id="IPR006318">
    <property type="entry name" value="PTS_EI-like"/>
</dbReference>
<dbReference type="InterPro" id="IPR008731">
    <property type="entry name" value="PTS_EIN"/>
</dbReference>
<dbReference type="InterPro" id="IPR036618">
    <property type="entry name" value="PtsI_HPr-bd_sf"/>
</dbReference>
<dbReference type="InterPro" id="IPR015813">
    <property type="entry name" value="Pyrv/PenolPyrv_kinase-like_dom"/>
</dbReference>
<dbReference type="InterPro" id="IPR040442">
    <property type="entry name" value="Pyrv_kinase-like_dom_sf"/>
</dbReference>
<dbReference type="NCBIfam" id="TIGR01417">
    <property type="entry name" value="PTS_I_fam"/>
    <property type="match status" value="1"/>
</dbReference>
<dbReference type="PANTHER" id="PTHR46244">
    <property type="entry name" value="PHOSPHOENOLPYRUVATE-PROTEIN PHOSPHOTRANSFERASE"/>
    <property type="match status" value="1"/>
</dbReference>
<dbReference type="PANTHER" id="PTHR46244:SF3">
    <property type="entry name" value="PHOSPHOENOLPYRUVATE-PROTEIN PHOSPHOTRANSFERASE"/>
    <property type="match status" value="1"/>
</dbReference>
<dbReference type="Pfam" id="PF05524">
    <property type="entry name" value="PEP-utilisers_N"/>
    <property type="match status" value="1"/>
</dbReference>
<dbReference type="Pfam" id="PF00391">
    <property type="entry name" value="PEP-utilizers"/>
    <property type="match status" value="1"/>
</dbReference>
<dbReference type="Pfam" id="PF02896">
    <property type="entry name" value="PEP-utilizers_C"/>
    <property type="match status" value="1"/>
</dbReference>
<dbReference type="PIRSF" id="PIRSF000732">
    <property type="entry name" value="PTS_enzyme_I"/>
    <property type="match status" value="1"/>
</dbReference>
<dbReference type="PRINTS" id="PR01736">
    <property type="entry name" value="PHPHTRNFRASE"/>
</dbReference>
<dbReference type="SUPFAM" id="SSF47831">
    <property type="entry name" value="Enzyme I of the PEP:sugar phosphotransferase system HPr-binding (sub)domain"/>
    <property type="match status" value="1"/>
</dbReference>
<dbReference type="SUPFAM" id="SSF51621">
    <property type="entry name" value="Phosphoenolpyruvate/pyruvate domain"/>
    <property type="match status" value="1"/>
</dbReference>
<dbReference type="SUPFAM" id="SSF52009">
    <property type="entry name" value="Phosphohistidine domain"/>
    <property type="match status" value="1"/>
</dbReference>
<dbReference type="PROSITE" id="PS00742">
    <property type="entry name" value="PEP_ENZYMES_2"/>
    <property type="match status" value="1"/>
</dbReference>
<dbReference type="PROSITE" id="PS00370">
    <property type="entry name" value="PEP_ENZYMES_PHOS_SITE"/>
    <property type="match status" value="1"/>
</dbReference>
<comment type="function">
    <text evidence="1">General (non sugar-specific) component of the phosphoenolpyruvate-dependent sugar phosphotransferase system (sugar PTS). This major carbohydrate active-transport system catalyzes the phosphorylation of incoming sugar substrates concomitantly with their translocation across the cell membrane. Enzyme I transfers the phosphoryl group from phosphoenolpyruvate (PEP) to the phosphoryl carrier protein (HPr).</text>
</comment>
<comment type="catalytic activity">
    <reaction evidence="1">
        <text>L-histidyl-[protein] + phosphoenolpyruvate = N(pros)-phospho-L-histidyl-[protein] + pyruvate</text>
        <dbReference type="Rhea" id="RHEA:23880"/>
        <dbReference type="Rhea" id="RHEA-COMP:9745"/>
        <dbReference type="Rhea" id="RHEA-COMP:9746"/>
        <dbReference type="ChEBI" id="CHEBI:15361"/>
        <dbReference type="ChEBI" id="CHEBI:29979"/>
        <dbReference type="ChEBI" id="CHEBI:58702"/>
        <dbReference type="ChEBI" id="CHEBI:64837"/>
        <dbReference type="EC" id="2.7.3.9"/>
    </reaction>
</comment>
<comment type="cofactor">
    <cofactor evidence="1">
        <name>Mg(2+)</name>
        <dbReference type="ChEBI" id="CHEBI:18420"/>
    </cofactor>
</comment>
<comment type="subunit">
    <text evidence="1">Homodimer.</text>
</comment>
<comment type="subcellular location">
    <subcellularLocation>
        <location evidence="3">Cytoplasm</location>
    </subcellularLocation>
</comment>
<comment type="domain">
    <text evidence="1">The N-terminal domain contains the HPr binding site, the central domain the pyrophosphate/phosphate carrier histidine, and the C-terminal domain the pyruvate binding site.</text>
</comment>
<comment type="miscellaneous">
    <text evidence="1">The reaction takes place in three steps, mediated by a phosphocarrier histidine residue located on the surface of the central domain. The two first partial reactions are catalyzed at an active site located on the N-terminal domain, and the third partial reaction is catalyzed at an active site located on the C-terminal domain. For catalytic turnover, the central domain swivels from the concave surface of the N-terminal domain to that of the C-terminal domain.</text>
</comment>
<comment type="similarity">
    <text evidence="3">Belongs to the PEP-utilizing enzyme family.</text>
</comment>
<keyword id="KW-0963">Cytoplasm</keyword>
<keyword id="KW-0418">Kinase</keyword>
<keyword id="KW-0460">Magnesium</keyword>
<keyword id="KW-0479">Metal-binding</keyword>
<keyword id="KW-0598">Phosphotransferase system</keyword>
<keyword id="KW-1185">Reference proteome</keyword>
<keyword id="KW-0762">Sugar transport</keyword>
<keyword id="KW-0808">Transferase</keyword>
<keyword id="KW-0813">Transport</keyword>
<feature type="chain" id="PRO_0000147089" description="Phosphoenolpyruvate-protein phosphotransferase">
    <location>
        <begin position="1"/>
        <end position="572"/>
    </location>
</feature>
<feature type="active site" description="Tele-phosphohistidine intermediate" evidence="1">
    <location>
        <position position="191"/>
    </location>
</feature>
<feature type="active site" description="Proton donor" evidence="1">
    <location>
        <position position="504"/>
    </location>
</feature>
<feature type="binding site" evidence="2">
    <location>
        <position position="298"/>
    </location>
    <ligand>
        <name>phosphoenolpyruvate</name>
        <dbReference type="ChEBI" id="CHEBI:58702"/>
    </ligand>
</feature>
<feature type="binding site" evidence="1">
    <location>
        <position position="334"/>
    </location>
    <ligand>
        <name>phosphoenolpyruvate</name>
        <dbReference type="ChEBI" id="CHEBI:58702"/>
    </ligand>
</feature>
<feature type="binding site" evidence="1">
    <location>
        <position position="433"/>
    </location>
    <ligand>
        <name>Mg(2+)</name>
        <dbReference type="ChEBI" id="CHEBI:18420"/>
    </ligand>
</feature>
<feature type="binding site" evidence="1">
    <location>
        <begin position="456"/>
        <end position="457"/>
    </location>
    <ligand>
        <name>phosphoenolpyruvate</name>
        <dbReference type="ChEBI" id="CHEBI:58702"/>
    </ligand>
</feature>
<feature type="binding site" evidence="1">
    <location>
        <position position="457"/>
    </location>
    <ligand>
        <name>Mg(2+)</name>
        <dbReference type="ChEBI" id="CHEBI:18420"/>
    </ligand>
</feature>
<feature type="binding site" evidence="2">
    <location>
        <position position="467"/>
    </location>
    <ligand>
        <name>phosphoenolpyruvate</name>
        <dbReference type="ChEBI" id="CHEBI:58702"/>
    </ligand>
</feature>
<evidence type="ECO:0000250" key="1">
    <source>
        <dbReference type="UniProtKB" id="P08839"/>
    </source>
</evidence>
<evidence type="ECO:0000250" key="2">
    <source>
        <dbReference type="UniProtKB" id="P23533"/>
    </source>
</evidence>
<evidence type="ECO:0000305" key="3"/>
<reference key="1">
    <citation type="journal article" date="2005" name="J. Bacteriol.">
        <title>Insights on evolution of virulence and resistance from the complete genome analysis of an early methicillin-resistant Staphylococcus aureus strain and a biofilm-producing methicillin-resistant Staphylococcus epidermidis strain.</title>
        <authorList>
            <person name="Gill S.R."/>
            <person name="Fouts D.E."/>
            <person name="Archer G.L."/>
            <person name="Mongodin E.F."/>
            <person name="DeBoy R.T."/>
            <person name="Ravel J."/>
            <person name="Paulsen I.T."/>
            <person name="Kolonay J.F."/>
            <person name="Brinkac L.M."/>
            <person name="Beanan M.J."/>
            <person name="Dodson R.J."/>
            <person name="Daugherty S.C."/>
            <person name="Madupu R."/>
            <person name="Angiuoli S.V."/>
            <person name="Durkin A.S."/>
            <person name="Haft D.H."/>
            <person name="Vamathevan J.J."/>
            <person name="Khouri H."/>
            <person name="Utterback T.R."/>
            <person name="Lee C."/>
            <person name="Dimitrov G."/>
            <person name="Jiang L."/>
            <person name="Qin H."/>
            <person name="Weidman J."/>
            <person name="Tran K."/>
            <person name="Kang K.H."/>
            <person name="Hance I.R."/>
            <person name="Nelson K.E."/>
            <person name="Fraser C.M."/>
        </authorList>
    </citation>
    <scope>NUCLEOTIDE SEQUENCE [LARGE SCALE GENOMIC DNA]</scope>
    <source>
        <strain>ATCC 35984 / DSM 28319 / BCRC 17069 / CCUG 31568 / BM 3577 / RP62A</strain>
    </source>
</reference>
<proteinExistence type="inferred from homology"/>
<protein>
    <recommendedName>
        <fullName evidence="1">Phosphoenolpyruvate-protein phosphotransferase</fullName>
        <ecNumber evidence="1">2.7.3.9</ecNumber>
    </recommendedName>
    <alternativeName>
        <fullName evidence="1">Phosphotransferase system, enzyme I</fullName>
    </alternativeName>
</protein>
<accession>Q5HQ85</accession>
<organism>
    <name type="scientific">Staphylococcus epidermidis (strain ATCC 35984 / DSM 28319 / BCRC 17069 / CCUG 31568 / BM 3577 / RP62A)</name>
    <dbReference type="NCBI Taxonomy" id="176279"/>
    <lineage>
        <taxon>Bacteria</taxon>
        <taxon>Bacillati</taxon>
        <taxon>Bacillota</taxon>
        <taxon>Bacilli</taxon>
        <taxon>Bacillales</taxon>
        <taxon>Staphylococcaceae</taxon>
        <taxon>Staphylococcus</taxon>
    </lineage>
</organism>
<name>PT1_STAEQ</name>
<sequence>MSKLIKGIAASDGVAIAKAYLIVEPDLSYDSNEKVTDIESEVEKFNDAIEASKIELTKIRNNAEAQLGADKAAIFDAHLLVLDDPELIQPIQDKIRNDKVNAATGLDEVTTQFISIFESMDNEYMKERAADIRDVSKRVLAHILGVDLPNPSLINESAVIVGNDLTPSDTAQLNKEFVQGFVTNIGGRTSHSAIMSRSLEIAAVVGTKSITEEVKQGDMIIVDGMSGDVIIDPTEDELIAYQNKRERFFEDKKELQKLRDADTVTVDGVHAELAANIGTPDDLSGVIDNGAQGIGLYRTEFLYMGRDQMPTEEEQFEAYKKVLETMDGKRVVVRTLDIGGDKELPYLDLPKEMNPFLGYRAIRLCLAQPEIFRPQLRALLRASVYGKLNIMFPMVATIKEFRDAKSMLLEEKENLLREGYEVSDDIELGIMVEIPATAALADVFAKEVDFFSIGTNDLIQYTLAADRMSERVSYLYQPYNPSILRLVKQVIEASHKEGKWTGMCGEMAGDQTAVPLLLGLGLDEFSMSATSILKARRQINGLSKNEMAELANRAVECSTQEEVVDLVNQLAK</sequence>